<name>COAD_ACIBS</name>
<dbReference type="EC" id="2.7.7.3" evidence="1"/>
<dbReference type="EMBL" id="CU468230">
    <property type="protein sequence ID" value="CAP01892.1"/>
    <property type="molecule type" value="Genomic_DNA"/>
</dbReference>
<dbReference type="PDB" id="5H16">
    <property type="method" value="X-ray"/>
    <property type="resolution" value="2.30 A"/>
    <property type="chains" value="A/B/C/D/E/F=1-163"/>
</dbReference>
<dbReference type="PDB" id="5H7X">
    <property type="method" value="X-ray"/>
    <property type="resolution" value="1.76 A"/>
    <property type="chains" value="A/B/C/D/E/F=1-163"/>
</dbReference>
<dbReference type="PDB" id="5YRR">
    <property type="method" value="X-ray"/>
    <property type="resolution" value="2.88 A"/>
    <property type="chains" value="A=1-163"/>
</dbReference>
<dbReference type="PDB" id="5Z1M">
    <property type="method" value="X-ray"/>
    <property type="resolution" value="1.87 A"/>
    <property type="chains" value="A/B/C=1-163"/>
</dbReference>
<dbReference type="PDBsum" id="5H16"/>
<dbReference type="PDBsum" id="5H7X"/>
<dbReference type="PDBsum" id="5YRR"/>
<dbReference type="PDBsum" id="5Z1M"/>
<dbReference type="SMR" id="B0VTH7"/>
<dbReference type="KEGG" id="abm:ABSDF2584"/>
<dbReference type="HOGENOM" id="CLU_100149_0_1_6"/>
<dbReference type="BRENDA" id="2.7.7.3">
    <property type="organism ID" value="98"/>
</dbReference>
<dbReference type="UniPathway" id="UPA00241">
    <property type="reaction ID" value="UER00355"/>
</dbReference>
<dbReference type="Proteomes" id="UP000001741">
    <property type="component" value="Chromosome"/>
</dbReference>
<dbReference type="GO" id="GO:0005737">
    <property type="term" value="C:cytoplasm"/>
    <property type="evidence" value="ECO:0007669"/>
    <property type="project" value="UniProtKB-SubCell"/>
</dbReference>
<dbReference type="GO" id="GO:0005524">
    <property type="term" value="F:ATP binding"/>
    <property type="evidence" value="ECO:0007669"/>
    <property type="project" value="UniProtKB-KW"/>
</dbReference>
<dbReference type="GO" id="GO:0004595">
    <property type="term" value="F:pantetheine-phosphate adenylyltransferase activity"/>
    <property type="evidence" value="ECO:0007669"/>
    <property type="project" value="UniProtKB-UniRule"/>
</dbReference>
<dbReference type="GO" id="GO:0015937">
    <property type="term" value="P:coenzyme A biosynthetic process"/>
    <property type="evidence" value="ECO:0007669"/>
    <property type="project" value="UniProtKB-UniRule"/>
</dbReference>
<dbReference type="CDD" id="cd02163">
    <property type="entry name" value="PPAT"/>
    <property type="match status" value="1"/>
</dbReference>
<dbReference type="Gene3D" id="3.40.50.620">
    <property type="entry name" value="HUPs"/>
    <property type="match status" value="1"/>
</dbReference>
<dbReference type="HAMAP" id="MF_00151">
    <property type="entry name" value="PPAT_bact"/>
    <property type="match status" value="1"/>
</dbReference>
<dbReference type="InterPro" id="IPR004821">
    <property type="entry name" value="Cyt_trans-like"/>
</dbReference>
<dbReference type="InterPro" id="IPR001980">
    <property type="entry name" value="PPAT"/>
</dbReference>
<dbReference type="InterPro" id="IPR014729">
    <property type="entry name" value="Rossmann-like_a/b/a_fold"/>
</dbReference>
<dbReference type="NCBIfam" id="TIGR01510">
    <property type="entry name" value="coaD_prev_kdtB"/>
    <property type="match status" value="1"/>
</dbReference>
<dbReference type="NCBIfam" id="TIGR00125">
    <property type="entry name" value="cyt_tran_rel"/>
    <property type="match status" value="1"/>
</dbReference>
<dbReference type="PANTHER" id="PTHR21342">
    <property type="entry name" value="PHOSPHOPANTETHEINE ADENYLYLTRANSFERASE"/>
    <property type="match status" value="1"/>
</dbReference>
<dbReference type="PANTHER" id="PTHR21342:SF1">
    <property type="entry name" value="PHOSPHOPANTETHEINE ADENYLYLTRANSFERASE"/>
    <property type="match status" value="1"/>
</dbReference>
<dbReference type="Pfam" id="PF01467">
    <property type="entry name" value="CTP_transf_like"/>
    <property type="match status" value="1"/>
</dbReference>
<dbReference type="PRINTS" id="PR01020">
    <property type="entry name" value="LPSBIOSNTHSS"/>
</dbReference>
<dbReference type="SUPFAM" id="SSF52374">
    <property type="entry name" value="Nucleotidylyl transferase"/>
    <property type="match status" value="1"/>
</dbReference>
<organism>
    <name type="scientific">Acinetobacter baumannii (strain SDF)</name>
    <dbReference type="NCBI Taxonomy" id="509170"/>
    <lineage>
        <taxon>Bacteria</taxon>
        <taxon>Pseudomonadati</taxon>
        <taxon>Pseudomonadota</taxon>
        <taxon>Gammaproteobacteria</taxon>
        <taxon>Moraxellales</taxon>
        <taxon>Moraxellaceae</taxon>
        <taxon>Acinetobacter</taxon>
        <taxon>Acinetobacter calcoaceticus/baumannii complex</taxon>
    </lineage>
</organism>
<keyword id="KW-0002">3D-structure</keyword>
<keyword id="KW-0067">ATP-binding</keyword>
<keyword id="KW-0173">Coenzyme A biosynthesis</keyword>
<keyword id="KW-0963">Cytoplasm</keyword>
<keyword id="KW-0460">Magnesium</keyword>
<keyword id="KW-0547">Nucleotide-binding</keyword>
<keyword id="KW-0548">Nucleotidyltransferase</keyword>
<keyword id="KW-0808">Transferase</keyword>
<accession>B0VTH7</accession>
<protein>
    <recommendedName>
        <fullName evidence="1">Phosphopantetheine adenylyltransferase</fullName>
        <ecNumber evidence="1">2.7.7.3</ecNumber>
    </recommendedName>
    <alternativeName>
        <fullName evidence="1">Dephospho-CoA pyrophosphorylase</fullName>
    </alternativeName>
    <alternativeName>
        <fullName evidence="1">Pantetheine-phosphate adenylyltransferase</fullName>
        <shortName evidence="1">PPAT</shortName>
    </alternativeName>
</protein>
<evidence type="ECO:0000255" key="1">
    <source>
        <dbReference type="HAMAP-Rule" id="MF_00151"/>
    </source>
</evidence>
<evidence type="ECO:0000269" key="2">
    <source ref="2"/>
</evidence>
<evidence type="ECO:0007829" key="3">
    <source>
        <dbReference type="PDB" id="5YRR"/>
    </source>
</evidence>
<evidence type="ECO:0007829" key="4">
    <source>
        <dbReference type="PDB" id="5Z1M"/>
    </source>
</evidence>
<reference key="1">
    <citation type="journal article" date="2008" name="PLoS ONE">
        <title>Comparative analysis of Acinetobacters: three genomes for three lifestyles.</title>
        <authorList>
            <person name="Vallenet D."/>
            <person name="Nordmann P."/>
            <person name="Barbe V."/>
            <person name="Poirel L."/>
            <person name="Mangenot S."/>
            <person name="Bataille E."/>
            <person name="Dossat C."/>
            <person name="Gas S."/>
            <person name="Kreimeyer A."/>
            <person name="Lenoble P."/>
            <person name="Oztas S."/>
            <person name="Poulain J."/>
            <person name="Segurens B."/>
            <person name="Robert C."/>
            <person name="Abergel C."/>
            <person name="Claverie J.-M."/>
            <person name="Raoult D."/>
            <person name="Medigue C."/>
            <person name="Weissenbach J."/>
            <person name="Cruveiller S."/>
        </authorList>
    </citation>
    <scope>NUCLEOTIDE SEQUENCE [LARGE SCALE GENOMIC DNA]</scope>
    <source>
        <strain>SDF</strain>
    </source>
</reference>
<reference key="2">
    <citation type="submission" date="2016-11" db="PDB data bank">
        <title>Crystal structure of the complex of phosphopantetheine adenylyltransferase from Acinetobacter baumannii with 2-hydroxy-1,2,3-propane tricarboxylate at 1.76 A resolution.</title>
        <authorList>
            <person name="Singh P.K."/>
            <person name="Gupta A."/>
            <person name="Kaur P."/>
            <person name="Sharma S."/>
            <person name="Singh T.P."/>
        </authorList>
    </citation>
    <scope>X-RAY CRYSTALLOGRAPHY (1.76 ANGSTROMS) OF 6-163</scope>
    <scope>SUBUNIT</scope>
</reference>
<sequence>MSKTSVIYPGTFDPITNGHVDLVTRASRMFDEVVVAIAIGHHKNPLFSLEERVALAQSSLGHLSNVEFVGFDGLLVNFFKEQKATAVLRGLRAVSDFEYEFQLANMNRQLDPHFEAVFLTPSEQYSFISSTLIREIARLKGDVTKFVPQAVVEAFERKHQQGW</sequence>
<comment type="function">
    <text evidence="1">Reversibly transfers an adenylyl group from ATP to 4'-phosphopantetheine, yielding dephospho-CoA (dPCoA) and pyrophosphate.</text>
</comment>
<comment type="catalytic activity">
    <reaction evidence="1">
        <text>(R)-4'-phosphopantetheine + ATP + H(+) = 3'-dephospho-CoA + diphosphate</text>
        <dbReference type="Rhea" id="RHEA:19801"/>
        <dbReference type="ChEBI" id="CHEBI:15378"/>
        <dbReference type="ChEBI" id="CHEBI:30616"/>
        <dbReference type="ChEBI" id="CHEBI:33019"/>
        <dbReference type="ChEBI" id="CHEBI:57328"/>
        <dbReference type="ChEBI" id="CHEBI:61723"/>
        <dbReference type="EC" id="2.7.7.3"/>
    </reaction>
</comment>
<comment type="cofactor">
    <cofactor evidence="1">
        <name>Mg(2+)</name>
        <dbReference type="ChEBI" id="CHEBI:18420"/>
    </cofactor>
</comment>
<comment type="pathway">
    <text evidence="1">Cofactor biosynthesis; coenzyme A biosynthesis; CoA from (R)-pantothenate: step 4/5.</text>
</comment>
<comment type="subunit">
    <text evidence="1 2">Homohexamer.</text>
</comment>
<comment type="subcellular location">
    <subcellularLocation>
        <location evidence="1">Cytoplasm</location>
    </subcellularLocation>
</comment>
<comment type="similarity">
    <text evidence="1">Belongs to the bacterial CoaD family.</text>
</comment>
<gene>
    <name evidence="1" type="primary">coaD</name>
    <name type="ordered locus">ABSDF2584</name>
</gene>
<feature type="chain" id="PRO_1000096752" description="Phosphopantetheine adenylyltransferase">
    <location>
        <begin position="1"/>
        <end position="163"/>
    </location>
</feature>
<feature type="binding site" evidence="1">
    <location>
        <begin position="11"/>
        <end position="12"/>
    </location>
    <ligand>
        <name>ATP</name>
        <dbReference type="ChEBI" id="CHEBI:30616"/>
    </ligand>
</feature>
<feature type="binding site" evidence="1">
    <location>
        <position position="11"/>
    </location>
    <ligand>
        <name>substrate</name>
    </ligand>
</feature>
<feature type="binding site" evidence="1">
    <location>
        <position position="19"/>
    </location>
    <ligand>
        <name>ATP</name>
        <dbReference type="ChEBI" id="CHEBI:30616"/>
    </ligand>
</feature>
<feature type="binding site" evidence="1">
    <location>
        <position position="43"/>
    </location>
    <ligand>
        <name>substrate</name>
    </ligand>
</feature>
<feature type="binding site" evidence="1">
    <location>
        <position position="75"/>
    </location>
    <ligand>
        <name>substrate</name>
    </ligand>
</feature>
<feature type="binding site" evidence="1">
    <location>
        <position position="89"/>
    </location>
    <ligand>
        <name>substrate</name>
    </ligand>
</feature>
<feature type="binding site" evidence="1">
    <location>
        <begin position="90"/>
        <end position="92"/>
    </location>
    <ligand>
        <name>ATP</name>
        <dbReference type="ChEBI" id="CHEBI:30616"/>
    </ligand>
</feature>
<feature type="binding site" evidence="1">
    <location>
        <position position="100"/>
    </location>
    <ligand>
        <name>ATP</name>
        <dbReference type="ChEBI" id="CHEBI:30616"/>
    </ligand>
</feature>
<feature type="binding site" evidence="1">
    <location>
        <begin position="125"/>
        <end position="131"/>
    </location>
    <ligand>
        <name>ATP</name>
        <dbReference type="ChEBI" id="CHEBI:30616"/>
    </ligand>
</feature>
<feature type="site" description="Transition state stabilizer" evidence="1">
    <location>
        <position position="19"/>
    </location>
</feature>
<feature type="strand" evidence="4">
    <location>
        <begin position="5"/>
        <end position="10"/>
    </location>
</feature>
<feature type="helix" evidence="4">
    <location>
        <begin position="17"/>
        <end position="29"/>
    </location>
</feature>
<feature type="strand" evidence="4">
    <location>
        <begin position="30"/>
        <end position="38"/>
    </location>
</feature>
<feature type="turn" evidence="3">
    <location>
        <begin position="41"/>
        <end position="43"/>
    </location>
</feature>
<feature type="helix" evidence="4">
    <location>
        <begin position="49"/>
        <end position="60"/>
    </location>
</feature>
<feature type="strand" evidence="4">
    <location>
        <begin position="66"/>
        <end position="71"/>
    </location>
</feature>
<feature type="helix" evidence="4">
    <location>
        <begin position="75"/>
        <end position="81"/>
    </location>
</feature>
<feature type="strand" evidence="4">
    <location>
        <begin position="85"/>
        <end position="90"/>
    </location>
</feature>
<feature type="helix" evidence="4">
    <location>
        <begin position="94"/>
        <end position="110"/>
    </location>
</feature>
<feature type="strand" evidence="4">
    <location>
        <begin position="116"/>
        <end position="119"/>
    </location>
</feature>
<feature type="helix" evidence="4">
    <location>
        <begin position="123"/>
        <end position="125"/>
    </location>
</feature>
<feature type="helix" evidence="4">
    <location>
        <begin position="130"/>
        <end position="138"/>
    </location>
</feature>
<feature type="turn" evidence="4">
    <location>
        <begin position="144"/>
        <end position="146"/>
    </location>
</feature>
<feature type="helix" evidence="4">
    <location>
        <begin position="149"/>
        <end position="160"/>
    </location>
</feature>
<proteinExistence type="evidence at protein level"/>